<comment type="function">
    <molecule>Isoform A1</molecule>
    <text evidence="5">Mediates the transport of urea driven by a concentration gradient across the cell membrane of the renal inner medullary collecting duct which is critical to the urinary concentrating mechanism.</text>
</comment>
<comment type="function">
    <molecule>Isoform A2</molecule>
    <text evidence="5">Mediates the transport of urea driven by a concentration gradient across the cell membrane of the renal inner medullary collecting duct which is critical to the urinary concentrating mechanism.</text>
</comment>
<comment type="function">
    <molecule>Isoform A3</molecule>
    <text evidence="4 5">Mediates the transport of urea driven by a concentration gradient across the cell membrane of the renal inner medullary collecting duct which is critical to the urinary concentrating mechanism.</text>
</comment>
<comment type="function">
    <molecule>Isoform A5</molecule>
    <text evidence="4">Mediates the transport of urea driven by a concentration gradient across the cell membrane (PubMed:11029290). Implicated in the urea movement across the blood-testis barrier and does not translocate water (PubMed:11029290).</text>
</comment>
<comment type="catalytic activity">
    <molecule>Isoform A1</molecule>
    <reaction evidence="5">
        <text>urea(in) = urea(out)</text>
        <dbReference type="Rhea" id="RHEA:32799"/>
        <dbReference type="ChEBI" id="CHEBI:16199"/>
    </reaction>
</comment>
<comment type="catalytic activity">
    <molecule>Isoform A2</molecule>
    <reaction evidence="5">
        <text>urea(in) = urea(out)</text>
        <dbReference type="Rhea" id="RHEA:32799"/>
        <dbReference type="ChEBI" id="CHEBI:16199"/>
    </reaction>
</comment>
<comment type="catalytic activity">
    <molecule>Isoform A3</molecule>
    <reaction evidence="4 5">
        <text>urea(in) = urea(out)</text>
        <dbReference type="Rhea" id="RHEA:32799"/>
        <dbReference type="ChEBI" id="CHEBI:16199"/>
    </reaction>
</comment>
<comment type="catalytic activity">
    <molecule>Isoform A5</molecule>
    <reaction evidence="4">
        <text>urea(in) = urea(out)</text>
        <dbReference type="Rhea" id="RHEA:32799"/>
        <dbReference type="ChEBI" id="CHEBI:16199"/>
    </reaction>
</comment>
<comment type="activity regulation">
    <molecule>Isoform A1</molecule>
    <text evidence="5">Inhibited by phloretin (PubMed:12217874). Activated by forskolin, 3-isobutyl-1-methylxanthine (IBMX) and cAMP (PubMed:12217874).</text>
</comment>
<comment type="activity regulation">
    <molecule>Isoform A2</molecule>
    <text evidence="5">Inhibited by phloretin.</text>
</comment>
<comment type="activity regulation">
    <molecule>Isoform A3</molecule>
    <text evidence="4 5">Inhibited by phloretin (PubMed:11029290). Activated by forskolin, 3-isobutyl-1-methylxanthine (IBMX) and cAMP (PubMed:12217874).</text>
</comment>
<comment type="activity regulation">
    <molecule>Isoform A5</molecule>
    <text evidence="4">Inhibited by phloretin.</text>
</comment>
<comment type="subcellular location">
    <subcellularLocation>
        <location evidence="5">Apical cell membrane</location>
        <topology evidence="2">Multi-pass membrane protein</topology>
    </subcellularLocation>
    <subcellularLocation>
        <location evidence="5">Basolateral cell membrane</location>
        <topology evidence="2">Multi-pass membrane protein</topology>
    </subcellularLocation>
</comment>
<comment type="alternative products">
    <event type="alternative splicing"/>
    <isoform>
        <id>Q8R4T9-1</id>
        <name>A1</name>
        <name>UTA-1</name>
        <sequence type="displayed"/>
    </isoform>
    <isoform>
        <id>Q8R4T9-2</id>
        <name>A2</name>
        <name>UTA-2</name>
        <sequence type="described" ref="VSP_038810"/>
    </isoform>
    <isoform>
        <id>Q8R4T9-3</id>
        <name>A3</name>
        <name>UTA-3</name>
        <sequence type="described" ref="VSP_038811 VSP_038812"/>
    </isoform>
    <isoform>
        <id>Q8R4T9-4</id>
        <name>A5</name>
        <name>UTA-5</name>
        <sequence type="described" ref="VSP_038809 VSP_038811 VSP_038812"/>
    </isoform>
</comment>
<comment type="tissue specificity">
    <molecule>Isoform A1</molecule>
    <text evidence="5">Highly expressed in kidney medulla (at protein level) (PubMed:12217874). Also detected in testes, heart, brain and liver (at protein level) (PubMed:12217874). In the kidney, present in thin descending limbs of the loop of Henle and in the middle and terminal inner medullary collecting ducts.</text>
</comment>
<comment type="tissue specificity">
    <molecule>Isoform A2</molecule>
    <text evidence="5">Expressed in the kidney medulla.</text>
</comment>
<comment type="tissue specificity">
    <molecule>Isoform A3</molecule>
    <text evidence="4 5">Expressed in the kidney medulla.</text>
</comment>
<comment type="tissue specificity">
    <molecule>Isoform A5</molecule>
    <text evidence="4">Expressed in the peritubular myoid cells forming the outermost layer of the seminiferous tubules within the testes and is not detected in kidney (PubMed:11029290). Expression levels are coordinated with the stage of testes development and increase 15 days postpartum, commensurate with the start of seminiferous tubule fluid movement (PubMed:11029290).</text>
</comment>
<comment type="similarity">
    <text evidence="9">Belongs to the urea transporter family.</text>
</comment>
<comment type="caution">
    <text evidence="9">It is uncertain whether Met-1 or Met-10 is the initiator.</text>
</comment>
<sequence>MSDHHPLKEMSDSNSSPLLPEPLSSRYKLYESELSSPTWPSSSQDTHPALPLLEMPEEKDLRSSDEDSHIVKIEKPNERNKRRESEVSRRASAGRGGFSLFQAVSYLTGDMKECKNWLKDKPLVLQFLDWVLRGAAQVMFVNNPISGLIIFIGLLIQNPWWTIAGTLGTVASTLAALALSQDRSAIASGLHGYNGMLVGLLMAVFSEKLDYYWWLLFPVTFTSMACPIISSALSTIFAKWDLPVFTLPFNIALTLYLAATGHYNLFFPTTLIKPASAAPNITWTEIEMPLLLQTIPVGVGQVYGCDNPWTGGVILVALFISSPLICLHAAIGSIVGLLAALTVATPFETIYLGLWSYNCVLSCIAIGGMFYALTWQTHLLALVCALFCAYMGAALSNTMAVVGVPSGTWAFCLSTLTFLLLTSNNTGIYKLPLSKVTYPEANRIYFLTVRRSEEEKSPNGGSGEQSHGSGQWKAEESSETVLPRRRSVFHIEWSSIRRRSKVFGKGEHQERQTKEPLPCPYRKPTVELFDLDTMEESTEIKVEANTARTSWIQSSMVAGGKRVSKALSYITGEMKECGEGLKDKSPVFQFLDWVLRGMSQVMFVNNPLSGILIVLGLFVQNPWWAISGCLGTVMSTLTALILSQDKSAIAAGLHGYNGVLVGLLMAVFSDKGNYYWWLLLPVIVMSMTCPILSSALSTVFSKWDLPVFTLPFNIAVTLYLAATGHHNLFFPTTLLQPATTTPNITWSDIQVSLLLRAIPVGIGQVYGCDNPWTGGIFLVALFISSPLICLHAAIGSTIGMLAALSIATPFDSIYFGLCGFNSTLACIAIGGMFYVITWQTHLLAIACALFAAYLGAALANMLSVFGLPPCTWPFCLSALTFLLLTSNNPAIYKLPLSKVTYPEANRIYFLSQEKNRRASTITKYQAYDVS</sequence>
<protein>
    <recommendedName>
        <fullName>Urea transporter 2</fullName>
    </recommendedName>
    <alternativeName>
        <fullName>Solute carrier family 14 member 2</fullName>
    </alternativeName>
    <alternativeName>
        <fullName>Urea transporter, kidney</fullName>
    </alternativeName>
</protein>
<feature type="chain" id="PRO_0000392531" description="Urea transporter 2">
    <location>
        <begin position="1"/>
        <end position="930"/>
    </location>
</feature>
<feature type="transmembrane region" description="Helical" evidence="2">
    <location>
        <begin position="145"/>
        <end position="165"/>
    </location>
</feature>
<feature type="transmembrane region" description="Helical" evidence="2">
    <location>
        <begin position="185"/>
        <end position="205"/>
    </location>
</feature>
<feature type="transmembrane region" description="Helical" evidence="2">
    <location>
        <begin position="213"/>
        <end position="233"/>
    </location>
</feature>
<feature type="transmembrane region" description="Helical" evidence="2">
    <location>
        <begin position="242"/>
        <end position="262"/>
    </location>
</feature>
<feature type="transmembrane region" description="Helical" evidence="2">
    <location>
        <begin position="280"/>
        <end position="300"/>
    </location>
</feature>
<feature type="transmembrane region" description="Helical" evidence="2">
    <location>
        <begin position="311"/>
        <end position="331"/>
    </location>
</feature>
<feature type="transmembrane region" description="Helical" evidence="2">
    <location>
        <begin position="350"/>
        <end position="372"/>
    </location>
</feature>
<feature type="transmembrane region" description="Helical" evidence="2">
    <location>
        <begin position="401"/>
        <end position="421"/>
    </location>
</feature>
<feature type="transmembrane region" description="Helical" evidence="2">
    <location>
        <begin position="610"/>
        <end position="630"/>
    </location>
</feature>
<feature type="transmembrane region" description="Helical" evidence="2">
    <location>
        <begin position="648"/>
        <end position="668"/>
    </location>
</feature>
<feature type="transmembrane region" description="Helical" evidence="2">
    <location>
        <begin position="676"/>
        <end position="696"/>
    </location>
</feature>
<feature type="transmembrane region" description="Helical" evidence="2">
    <location>
        <begin position="705"/>
        <end position="725"/>
    </location>
</feature>
<feature type="transmembrane region" description="Helical" evidence="2">
    <location>
        <begin position="774"/>
        <end position="794"/>
    </location>
</feature>
<feature type="transmembrane region" description="Helical" evidence="2">
    <location>
        <begin position="813"/>
        <end position="833"/>
    </location>
</feature>
<feature type="transmembrane region" description="Helical" evidence="2">
    <location>
        <begin position="842"/>
        <end position="862"/>
    </location>
</feature>
<feature type="transmembrane region" description="Helical" evidence="2">
    <location>
        <begin position="864"/>
        <end position="884"/>
    </location>
</feature>
<feature type="region of interest" description="Disordered" evidence="3">
    <location>
        <begin position="1"/>
        <end position="90"/>
    </location>
</feature>
<feature type="region of interest" description="Disordered" evidence="3">
    <location>
        <begin position="452"/>
        <end position="479"/>
    </location>
</feature>
<feature type="compositionally biased region" description="Basic and acidic residues" evidence="3">
    <location>
        <begin position="1"/>
        <end position="11"/>
    </location>
</feature>
<feature type="compositionally biased region" description="Low complexity" evidence="3">
    <location>
        <begin position="12"/>
        <end position="25"/>
    </location>
</feature>
<feature type="compositionally biased region" description="Low complexity" evidence="3">
    <location>
        <begin position="32"/>
        <end position="43"/>
    </location>
</feature>
<feature type="compositionally biased region" description="Basic and acidic residues" evidence="3">
    <location>
        <begin position="56"/>
        <end position="89"/>
    </location>
</feature>
<feature type="modified residue" description="Phosphoserine" evidence="1">
    <location>
        <position position="487"/>
    </location>
</feature>
<feature type="glycosylation site" description="N-linked (GlcNAc...) asparagine" evidence="2">
    <location>
        <position position="743"/>
    </location>
</feature>
<feature type="splice variant" id="VSP_038810" description="In isoform A2." evidence="7 8">
    <location>
        <begin position="1"/>
        <end position="533"/>
    </location>
</feature>
<feature type="splice variant" id="VSP_038809" description="In isoform A5." evidence="6">
    <location>
        <begin position="1"/>
        <end position="138"/>
    </location>
</feature>
<feature type="splice variant" id="VSP_038811" description="In isoform A3 and isoform A5." evidence="6">
    <original>G</original>
    <variation>D</variation>
    <location>
        <position position="461"/>
    </location>
</feature>
<feature type="splice variant" id="VSP_038812" description="In isoform A3 and isoform A5." evidence="6">
    <location>
        <begin position="462"/>
        <end position="930"/>
    </location>
</feature>
<feature type="sequence conflict" description="In Ref. 1; AAG32167/AAG32168, 2; AAM00357 and 4; EDL09434." evidence="9" ref="1 2 4">
    <original>V</original>
    <variation>M</variation>
    <location>
        <position position="313"/>
    </location>
</feature>
<feature type="sequence conflict" description="In Ref. 5; AAI50681." evidence="9" ref="5">
    <original>T</original>
    <variation>A</variation>
    <location>
        <position position="538"/>
    </location>
</feature>
<feature type="sequence conflict" description="In Ref. 2; AAM00357 and 3; AAM21206." evidence="9" ref="2 3">
    <original>K</original>
    <variation>R</variation>
    <location>
        <position position="898"/>
    </location>
</feature>
<proteinExistence type="evidence at protein level"/>
<name>UT2_MOUSE</name>
<keyword id="KW-0025">Alternative splicing</keyword>
<keyword id="KW-1003">Cell membrane</keyword>
<keyword id="KW-0325">Glycoprotein</keyword>
<keyword id="KW-0472">Membrane</keyword>
<keyword id="KW-0597">Phosphoprotein</keyword>
<keyword id="KW-1185">Reference proteome</keyword>
<keyword id="KW-0812">Transmembrane</keyword>
<keyword id="KW-1133">Transmembrane helix</keyword>
<accession>Q8R4T9</accession>
<accession>B2RWS5</accession>
<accession>Q8K5D0</accession>
<accession>Q9ES04</accession>
<accession>Q9ES05</accession>
<evidence type="ECO:0000250" key="1">
    <source>
        <dbReference type="UniProtKB" id="Q62668"/>
    </source>
</evidence>
<evidence type="ECO:0000255" key="2"/>
<evidence type="ECO:0000256" key="3">
    <source>
        <dbReference type="SAM" id="MobiDB-lite"/>
    </source>
</evidence>
<evidence type="ECO:0000269" key="4">
    <source>
    </source>
</evidence>
<evidence type="ECO:0000269" key="5">
    <source>
    </source>
</evidence>
<evidence type="ECO:0000303" key="6">
    <source>
    </source>
</evidence>
<evidence type="ECO:0000303" key="7">
    <source>
    </source>
</evidence>
<evidence type="ECO:0000303" key="8">
    <source>
    </source>
</evidence>
<evidence type="ECO:0000305" key="9"/>
<reference key="1">
    <citation type="journal article" date="2000" name="Am. J. Physiol.">
        <title>Molecular characterization of a novel UT-A urea transporter isoform (UT-A5) in testis.</title>
        <authorList>
            <person name="Fenton R.A."/>
            <person name="Howorth A."/>
            <person name="Cooper G.J."/>
            <person name="Meccariello R."/>
            <person name="Morris I.D."/>
            <person name="Smith C.P."/>
        </authorList>
    </citation>
    <scope>NUCLEOTIDE SEQUENCE [MRNA] (ISOFORMS A3 AND A5)</scope>
    <scope>TISSUE SPECIFICITY (ISOFORMS A3 AND A5)</scope>
    <scope>FUNCTION (ISOFORMS A3 AND A5)</scope>
    <scope>TRANSPORTER ACTIVITY (ISOFORMS A3 AND A5)</scope>
    <scope>ACTIVITY REGULATION (ISOFORMS A3 AND A5)</scope>
    <source>
        <strain>MF1</strain>
        <tissue>Kidney inner medulla</tissue>
        <tissue>Testis</tissue>
    </source>
</reference>
<reference key="2">
    <citation type="journal article" date="2002" name="Am. J. Physiol.">
        <title>Structure and characterization of the mouse UT-A gene (Slc14a2).</title>
        <authorList>
            <person name="Fenton R.A."/>
            <person name="Cottingham C.A."/>
            <person name="Stewart G.S."/>
            <person name="Howorth A."/>
            <person name="Hewitt J.A."/>
            <person name="Smith C.P."/>
        </authorList>
    </citation>
    <scope>NUCLEOTIDE SEQUENCE [MRNA] (ISOFORMS A1 AND A2)</scope>
    <source>
        <strain>MF1</strain>
        <tissue>Kidney inner medulla</tissue>
    </source>
</reference>
<reference key="3">
    <citation type="journal article" date="2002" name="Am. J. Physiol.">
        <title>Characterization of mouse urea transporters UT-A1 and UT-A2.</title>
        <authorList>
            <person name="Fenton R.A."/>
            <person name="Stewart G.S."/>
            <person name="Carpenter B."/>
            <person name="Howorth A."/>
            <person name="Potter E.A."/>
            <person name="Cooper G.J."/>
            <person name="Smith C.P."/>
        </authorList>
    </citation>
    <scope>NUCLEOTIDE SEQUENCE [MRNA] (ISOFORM A2)</scope>
    <scope>FUNCTION (ISOFORMS A1; A2 AND A3)</scope>
    <scope>TRANSPORTER ACTIVITY (ISOFORMS A1; A2 AND 3)</scope>
    <scope>ACTIVITY REGULATION (ISOFORMS A1; A2 AND A3)</scope>
    <scope>TISSUE SPECIFICITY (ISOFORMS A1; A2 AND A3)</scope>
    <scope>SUBCELLULAR LOCATION</scope>
    <source>
        <strain>MF1</strain>
        <tissue>Kidney inner medulla</tissue>
    </source>
</reference>
<reference key="4">
    <citation type="submission" date="2005-09" db="EMBL/GenBank/DDBJ databases">
        <authorList>
            <person name="Mural R.J."/>
            <person name="Adams M.D."/>
            <person name="Myers E.W."/>
            <person name="Smith H.O."/>
            <person name="Venter J.C."/>
        </authorList>
    </citation>
    <scope>NUCLEOTIDE SEQUENCE [LARGE SCALE GENOMIC DNA]</scope>
</reference>
<reference key="5">
    <citation type="journal article" date="2004" name="Genome Res.">
        <title>The status, quality, and expansion of the NIH full-length cDNA project: the Mammalian Gene Collection (MGC).</title>
        <authorList>
            <consortium name="The MGC Project Team"/>
        </authorList>
    </citation>
    <scope>NUCLEOTIDE SEQUENCE [LARGE SCALE MRNA] (ISOFORM A1)</scope>
    <source>
        <tissue>Brain</tissue>
    </source>
</reference>
<reference key="6">
    <citation type="journal article" date="2010" name="Cell">
        <title>A tissue-specific atlas of mouse protein phosphorylation and expression.</title>
        <authorList>
            <person name="Huttlin E.L."/>
            <person name="Jedrychowski M.P."/>
            <person name="Elias J.E."/>
            <person name="Goswami T."/>
            <person name="Rad R."/>
            <person name="Beausoleil S.A."/>
            <person name="Villen J."/>
            <person name="Haas W."/>
            <person name="Sowa M.E."/>
            <person name="Gygi S.P."/>
        </authorList>
    </citation>
    <scope>IDENTIFICATION BY MASS SPECTROMETRY [LARGE SCALE ANALYSIS]</scope>
    <source>
        <tissue>Kidney</tissue>
    </source>
</reference>
<dbReference type="EMBL" id="AF258601">
    <property type="protein sequence ID" value="AAG32167.1"/>
    <property type="molecule type" value="mRNA"/>
</dbReference>
<dbReference type="EMBL" id="AF258602">
    <property type="protein sequence ID" value="AAG32168.1"/>
    <property type="molecule type" value="mRNA"/>
</dbReference>
<dbReference type="EMBL" id="AF366052">
    <property type="protein sequence ID" value="AAM00357.1"/>
    <property type="molecule type" value="mRNA"/>
</dbReference>
<dbReference type="EMBL" id="AF367359">
    <property type="protein sequence ID" value="AAM21206.1"/>
    <property type="molecule type" value="mRNA"/>
</dbReference>
<dbReference type="EMBL" id="CH466528">
    <property type="protein sequence ID" value="EDL09434.1"/>
    <property type="molecule type" value="Genomic_DNA"/>
</dbReference>
<dbReference type="EMBL" id="BC150680">
    <property type="protein sequence ID" value="AAI50681.1"/>
    <property type="molecule type" value="mRNA"/>
</dbReference>
<dbReference type="CCDS" id="CCDS29361.1">
    <molecule id="Q8R4T9-1"/>
</dbReference>
<dbReference type="CCDS" id="CCDS50331.1">
    <molecule id="Q8R4T9-4"/>
</dbReference>
<dbReference type="CCDS" id="CCDS89283.1">
    <molecule id="Q8R4T9-2"/>
</dbReference>
<dbReference type="CCDS" id="CCDS89284.1">
    <molecule id="Q8R4T9-3"/>
</dbReference>
<dbReference type="RefSeq" id="NP_001103744.1">
    <property type="nucleotide sequence ID" value="NM_001110274.1"/>
</dbReference>
<dbReference type="RefSeq" id="NP_109608.1">
    <property type="nucleotide sequence ID" value="NM_030683.3"/>
</dbReference>
<dbReference type="SMR" id="Q8R4T9"/>
<dbReference type="FunCoup" id="Q8R4T9">
    <property type="interactions" value="389"/>
</dbReference>
<dbReference type="STRING" id="10090.ENSMUSP00000157851"/>
<dbReference type="GlyCosmos" id="Q8R4T9">
    <property type="glycosylation" value="1 site, No reported glycans"/>
</dbReference>
<dbReference type="GlyGen" id="Q8R4T9">
    <property type="glycosylation" value="1 site"/>
</dbReference>
<dbReference type="iPTMnet" id="Q8R4T9"/>
<dbReference type="PhosphoSitePlus" id="Q8R4T9"/>
<dbReference type="PaxDb" id="10090-ENSMUSP00000025434"/>
<dbReference type="ProteomicsDB" id="297946">
    <molecule id="Q8R4T9-1"/>
</dbReference>
<dbReference type="ProteomicsDB" id="297947">
    <molecule id="Q8R4T9-2"/>
</dbReference>
<dbReference type="ProteomicsDB" id="297948">
    <molecule id="Q8R4T9-3"/>
</dbReference>
<dbReference type="ProteomicsDB" id="297949">
    <molecule id="Q8R4T9-4"/>
</dbReference>
<dbReference type="DNASU" id="27411"/>
<dbReference type="GeneID" id="27411"/>
<dbReference type="KEGG" id="mmu:27411"/>
<dbReference type="UCSC" id="uc008fsh.2">
    <molecule id="Q8R4T9-3"/>
    <property type="organism name" value="mouse"/>
</dbReference>
<dbReference type="UCSC" id="uc012bfh.1">
    <molecule id="Q8R4T9-4"/>
    <property type="organism name" value="mouse"/>
</dbReference>
<dbReference type="AGR" id="MGI:1351653"/>
<dbReference type="CTD" id="8170"/>
<dbReference type="MGI" id="MGI:1351653">
    <property type="gene designation" value="Slc14a2"/>
</dbReference>
<dbReference type="eggNOG" id="ENOG502QWSG">
    <property type="taxonomic scope" value="Eukaryota"/>
</dbReference>
<dbReference type="InParanoid" id="Q8R4T9"/>
<dbReference type="OrthoDB" id="426293at2759"/>
<dbReference type="PhylomeDB" id="Q8R4T9"/>
<dbReference type="Reactome" id="R-MMU-425366">
    <property type="pathway name" value="Transport of bile salts and organic acids, metal ions and amine compounds"/>
</dbReference>
<dbReference type="BioGRID-ORCS" id="27411">
    <property type="hits" value="6 hits in 70 CRISPR screens"/>
</dbReference>
<dbReference type="ChiTaRS" id="Slc14a2">
    <property type="organism name" value="mouse"/>
</dbReference>
<dbReference type="PRO" id="PR:Q8R4T9"/>
<dbReference type="Proteomes" id="UP000000589">
    <property type="component" value="Unplaced"/>
</dbReference>
<dbReference type="RNAct" id="Q8R4T9">
    <property type="molecule type" value="protein"/>
</dbReference>
<dbReference type="GO" id="GO:0016324">
    <property type="term" value="C:apical plasma membrane"/>
    <property type="evidence" value="ECO:0000314"/>
    <property type="project" value="UniProtKB"/>
</dbReference>
<dbReference type="GO" id="GO:0016323">
    <property type="term" value="C:basolateral plasma membrane"/>
    <property type="evidence" value="ECO:0000314"/>
    <property type="project" value="UniProtKB"/>
</dbReference>
<dbReference type="GO" id="GO:0016020">
    <property type="term" value="C:membrane"/>
    <property type="evidence" value="ECO:0000250"/>
    <property type="project" value="MGI"/>
</dbReference>
<dbReference type="GO" id="GO:0050839">
    <property type="term" value="F:cell adhesion molecule binding"/>
    <property type="evidence" value="ECO:0000266"/>
    <property type="project" value="MGI"/>
</dbReference>
<dbReference type="GO" id="GO:0015204">
    <property type="term" value="F:urea transmembrane transporter activity"/>
    <property type="evidence" value="ECO:0000314"/>
    <property type="project" value="UniProtKB"/>
</dbReference>
<dbReference type="FunFam" id="1.10.3430.10:FF:000002">
    <property type="entry name" value="urea transporter 2"/>
    <property type="match status" value="2"/>
</dbReference>
<dbReference type="Gene3D" id="1.10.3430.10">
    <property type="entry name" value="Ammonium transporter AmtB like domains"/>
    <property type="match status" value="2"/>
</dbReference>
<dbReference type="InterPro" id="IPR029020">
    <property type="entry name" value="Ammonium/urea_transptr"/>
</dbReference>
<dbReference type="InterPro" id="IPR004937">
    <property type="entry name" value="Urea_transporter"/>
</dbReference>
<dbReference type="PANTHER" id="PTHR10464">
    <property type="entry name" value="UREA TRANSPORTER"/>
    <property type="match status" value="1"/>
</dbReference>
<dbReference type="PANTHER" id="PTHR10464:SF6">
    <property type="entry name" value="UREA TRANSPORTER 2"/>
    <property type="match status" value="1"/>
</dbReference>
<dbReference type="Pfam" id="PF03253">
    <property type="entry name" value="UT"/>
    <property type="match status" value="2"/>
</dbReference>
<gene>
    <name type="primary">Slc14a2</name>
    <name type="synonym">Ut2</name>
</gene>
<organism>
    <name type="scientific">Mus musculus</name>
    <name type="common">Mouse</name>
    <dbReference type="NCBI Taxonomy" id="10090"/>
    <lineage>
        <taxon>Eukaryota</taxon>
        <taxon>Metazoa</taxon>
        <taxon>Chordata</taxon>
        <taxon>Craniata</taxon>
        <taxon>Vertebrata</taxon>
        <taxon>Euteleostomi</taxon>
        <taxon>Mammalia</taxon>
        <taxon>Eutheria</taxon>
        <taxon>Euarchontoglires</taxon>
        <taxon>Glires</taxon>
        <taxon>Rodentia</taxon>
        <taxon>Myomorpha</taxon>
        <taxon>Muroidea</taxon>
        <taxon>Muridae</taxon>
        <taxon>Murinae</taxon>
        <taxon>Mus</taxon>
        <taxon>Mus</taxon>
    </lineage>
</organism>